<accession>D1ZET3</accession>
<accession>F7W4V2</accession>
<keyword id="KW-0342">GTP-binding</keyword>
<keyword id="KW-0378">Hydrolase</keyword>
<keyword id="KW-0472">Membrane</keyword>
<keyword id="KW-0496">Mitochondrion</keyword>
<keyword id="KW-0999">Mitochondrion inner membrane</keyword>
<keyword id="KW-0547">Nucleotide-binding</keyword>
<keyword id="KW-0648">Protein biosynthesis</keyword>
<keyword id="KW-1185">Reference proteome</keyword>
<sequence>MSAPTTTKASASSSPPALRPLSSSLLLTIPTTNAQLVLPSVTVPAARRHNSTKSTNSTTSTNSTTATSKMPIERRAAEIEKRIAAIPLERYRNFCIVAHIDHGKSTLSDRLLEHTGTIVAGDGNKQVLDKLDVERERGITVKAQTCTMIYKHKEDGLDYLLHLVDTPGHVDFRAEVTRSYSSCSGALLLVDASQGVQAQTVANFYLAFAQGLSLVPVVNKIDMASADVPRVLEQLETVFELDTSTAVKVSAKTGQGVGEILPAVIKKMPAPVGDAKKPLRMLLVDSWYDTFKGVVLLVRLFDGTLKQGDKVYSYATGNEYIVGEVGIQYPDAVPQKVLRAGQVGYVFFNPGMKRIQDAKLGDTFTNVGYEDIVEPCPGFEEPKPMVFVAAFPTNQDDYGRLADSISHLVLNDRSVTLQKDYSEALGAGWRLGFLGSLHCSVFQDRLRQEHGASIIITEPAVPTKIVWSTGQEEIVTNPAEFPDPDDHRIRSATLYEPFVNATVTLPEEYVGRCIEICENARGVQKSLEFFTATQVILKYELPAASLVDDLFGKLKGATKGYATLDYEDAGWRQAQLVKLNLLVNKKAVDAVARIVHTSQVERLGRQWVTKFKEHVDRQMFEVIIQAAAGRRIVARETIKPFRKDVLAKLHASDITRRRKLLEKQKAGRKRLRAVGNVIIDQSAFQKFLSK</sequence>
<reference key="1">
    <citation type="journal article" date="2010" name="PLoS Genet.">
        <title>De novo assembly of a 40 Mb eukaryotic genome from short sequence reads: Sordaria macrospora, a model organism for fungal morphogenesis.</title>
        <authorList>
            <person name="Nowrousian M."/>
            <person name="Stajich J.E."/>
            <person name="Chu M."/>
            <person name="Engh I."/>
            <person name="Espagne E."/>
            <person name="Halliday K."/>
            <person name="Kamerewerd J."/>
            <person name="Kempken F."/>
            <person name="Knab B."/>
            <person name="Kuo H.-C."/>
            <person name="Osiewacz H.D."/>
            <person name="Poeggeler S."/>
            <person name="Read N.D."/>
            <person name="Seiler S."/>
            <person name="Smith K.M."/>
            <person name="Zickler D."/>
            <person name="Kueck U."/>
            <person name="Freitag M."/>
        </authorList>
    </citation>
    <scope>NUCLEOTIDE SEQUENCE [LARGE SCALE GENOMIC DNA]</scope>
    <source>
        <strain>ATCC MYA-333 / DSM 997 / K(L3346) / K-hell</strain>
    </source>
</reference>
<evidence type="ECO:0000255" key="1">
    <source>
        <dbReference type="HAMAP-Rule" id="MF_03137"/>
    </source>
</evidence>
<evidence type="ECO:0000256" key="2">
    <source>
        <dbReference type="SAM" id="MobiDB-lite"/>
    </source>
</evidence>
<evidence type="ECO:0000305" key="3"/>
<dbReference type="EC" id="3.6.5.-"/>
<dbReference type="EMBL" id="CABT02000029">
    <property type="protein sequence ID" value="CCC12539.1"/>
    <property type="molecule type" value="Genomic_DNA"/>
</dbReference>
<dbReference type="RefSeq" id="XP_003349110.1">
    <property type="nucleotide sequence ID" value="XM_003349062.1"/>
</dbReference>
<dbReference type="SMR" id="D1ZET3"/>
<dbReference type="FunCoup" id="D1ZET3">
    <property type="interactions" value="678"/>
</dbReference>
<dbReference type="STRING" id="771870.D1ZET3"/>
<dbReference type="VEuPathDB" id="FungiDB:SMAC_06946"/>
<dbReference type="eggNOG" id="KOG0462">
    <property type="taxonomic scope" value="Eukaryota"/>
</dbReference>
<dbReference type="HOGENOM" id="CLU_009995_3_1_1"/>
<dbReference type="InParanoid" id="D1ZET3"/>
<dbReference type="OMA" id="QVKCDEN"/>
<dbReference type="OrthoDB" id="1074at2759"/>
<dbReference type="Proteomes" id="UP000001881">
    <property type="component" value="Unassembled WGS sequence"/>
</dbReference>
<dbReference type="GO" id="GO:0005743">
    <property type="term" value="C:mitochondrial inner membrane"/>
    <property type="evidence" value="ECO:0007669"/>
    <property type="project" value="UniProtKB-SubCell"/>
</dbReference>
<dbReference type="GO" id="GO:0005759">
    <property type="term" value="C:mitochondrial matrix"/>
    <property type="evidence" value="ECO:0007669"/>
    <property type="project" value="UniProtKB-UniRule"/>
</dbReference>
<dbReference type="GO" id="GO:0005525">
    <property type="term" value="F:GTP binding"/>
    <property type="evidence" value="ECO:0007669"/>
    <property type="project" value="UniProtKB-UniRule"/>
</dbReference>
<dbReference type="GO" id="GO:0003924">
    <property type="term" value="F:GTPase activity"/>
    <property type="evidence" value="ECO:0007669"/>
    <property type="project" value="UniProtKB-UniRule"/>
</dbReference>
<dbReference type="GO" id="GO:0097177">
    <property type="term" value="F:mitochondrial ribosome binding"/>
    <property type="evidence" value="ECO:0007669"/>
    <property type="project" value="EnsemblFungi"/>
</dbReference>
<dbReference type="GO" id="GO:0045727">
    <property type="term" value="P:positive regulation of translation"/>
    <property type="evidence" value="ECO:0007669"/>
    <property type="project" value="UniProtKB-UniRule"/>
</dbReference>
<dbReference type="GO" id="GO:0006412">
    <property type="term" value="P:translation"/>
    <property type="evidence" value="ECO:0007669"/>
    <property type="project" value="UniProtKB-KW"/>
</dbReference>
<dbReference type="CDD" id="cd03699">
    <property type="entry name" value="EF4_II"/>
    <property type="match status" value="1"/>
</dbReference>
<dbReference type="CDD" id="cd16260">
    <property type="entry name" value="EF4_III"/>
    <property type="match status" value="1"/>
</dbReference>
<dbReference type="CDD" id="cd01890">
    <property type="entry name" value="LepA"/>
    <property type="match status" value="1"/>
</dbReference>
<dbReference type="CDD" id="cd03709">
    <property type="entry name" value="lepA_C"/>
    <property type="match status" value="1"/>
</dbReference>
<dbReference type="FunFam" id="3.40.50.300:FF:000078">
    <property type="entry name" value="Elongation factor 4"/>
    <property type="match status" value="1"/>
</dbReference>
<dbReference type="FunFam" id="2.40.30.10:FF:000015">
    <property type="entry name" value="Translation factor GUF1, mitochondrial"/>
    <property type="match status" value="1"/>
</dbReference>
<dbReference type="FunFam" id="3.30.70.240:FF:000007">
    <property type="entry name" value="Translation factor GUF1, mitochondrial"/>
    <property type="match status" value="1"/>
</dbReference>
<dbReference type="FunFam" id="3.30.70.2570:FF:000001">
    <property type="entry name" value="Translation factor GUF1, mitochondrial"/>
    <property type="match status" value="1"/>
</dbReference>
<dbReference type="FunFam" id="3.30.70.870:FF:000004">
    <property type="entry name" value="Translation factor GUF1, mitochondrial"/>
    <property type="match status" value="1"/>
</dbReference>
<dbReference type="Gene3D" id="3.30.70.240">
    <property type="match status" value="1"/>
</dbReference>
<dbReference type="Gene3D" id="3.30.70.2570">
    <property type="entry name" value="Elongation factor 4, C-terminal domain"/>
    <property type="match status" value="1"/>
</dbReference>
<dbReference type="Gene3D" id="3.30.70.870">
    <property type="entry name" value="Elongation Factor G (Translational Gtpase), domain 3"/>
    <property type="match status" value="1"/>
</dbReference>
<dbReference type="Gene3D" id="3.40.50.300">
    <property type="entry name" value="P-loop containing nucleotide triphosphate hydrolases"/>
    <property type="match status" value="1"/>
</dbReference>
<dbReference type="Gene3D" id="2.40.30.10">
    <property type="entry name" value="Translation factors"/>
    <property type="match status" value="1"/>
</dbReference>
<dbReference type="HAMAP" id="MF_00071">
    <property type="entry name" value="LepA"/>
    <property type="match status" value="1"/>
</dbReference>
<dbReference type="InterPro" id="IPR006297">
    <property type="entry name" value="EF-4"/>
</dbReference>
<dbReference type="InterPro" id="IPR035647">
    <property type="entry name" value="EFG_III/V"/>
</dbReference>
<dbReference type="InterPro" id="IPR000640">
    <property type="entry name" value="EFG_V-like"/>
</dbReference>
<dbReference type="InterPro" id="IPR004161">
    <property type="entry name" value="EFTu-like_2"/>
</dbReference>
<dbReference type="InterPro" id="IPR031157">
    <property type="entry name" value="G_TR_CS"/>
</dbReference>
<dbReference type="InterPro" id="IPR038363">
    <property type="entry name" value="LepA_C_sf"/>
</dbReference>
<dbReference type="InterPro" id="IPR013842">
    <property type="entry name" value="LepA_CTD"/>
</dbReference>
<dbReference type="InterPro" id="IPR035654">
    <property type="entry name" value="LepA_IV"/>
</dbReference>
<dbReference type="InterPro" id="IPR027417">
    <property type="entry name" value="P-loop_NTPase"/>
</dbReference>
<dbReference type="InterPro" id="IPR005225">
    <property type="entry name" value="Small_GTP-bd"/>
</dbReference>
<dbReference type="InterPro" id="IPR000795">
    <property type="entry name" value="T_Tr_GTP-bd_dom"/>
</dbReference>
<dbReference type="InterPro" id="IPR009000">
    <property type="entry name" value="Transl_B-barrel_sf"/>
</dbReference>
<dbReference type="NCBIfam" id="TIGR01393">
    <property type="entry name" value="lepA"/>
    <property type="match status" value="1"/>
</dbReference>
<dbReference type="NCBIfam" id="TIGR00231">
    <property type="entry name" value="small_GTP"/>
    <property type="match status" value="1"/>
</dbReference>
<dbReference type="PANTHER" id="PTHR43512:SF7">
    <property type="entry name" value="TRANSLATION FACTOR GUF1, MITOCHONDRIAL"/>
    <property type="match status" value="1"/>
</dbReference>
<dbReference type="PANTHER" id="PTHR43512">
    <property type="entry name" value="TRANSLATION FACTOR GUF1-RELATED"/>
    <property type="match status" value="1"/>
</dbReference>
<dbReference type="Pfam" id="PF00679">
    <property type="entry name" value="EFG_C"/>
    <property type="match status" value="1"/>
</dbReference>
<dbReference type="Pfam" id="PF00009">
    <property type="entry name" value="GTP_EFTU"/>
    <property type="match status" value="1"/>
</dbReference>
<dbReference type="Pfam" id="PF03144">
    <property type="entry name" value="GTP_EFTU_D2"/>
    <property type="match status" value="1"/>
</dbReference>
<dbReference type="Pfam" id="PF06421">
    <property type="entry name" value="LepA_C"/>
    <property type="match status" value="1"/>
</dbReference>
<dbReference type="PRINTS" id="PR00315">
    <property type="entry name" value="ELONGATNFCT"/>
</dbReference>
<dbReference type="SUPFAM" id="SSF54980">
    <property type="entry name" value="EF-G C-terminal domain-like"/>
    <property type="match status" value="2"/>
</dbReference>
<dbReference type="SUPFAM" id="SSF52540">
    <property type="entry name" value="P-loop containing nucleoside triphosphate hydrolases"/>
    <property type="match status" value="1"/>
</dbReference>
<dbReference type="SUPFAM" id="SSF50447">
    <property type="entry name" value="Translation proteins"/>
    <property type="match status" value="1"/>
</dbReference>
<dbReference type="PROSITE" id="PS00301">
    <property type="entry name" value="G_TR_1"/>
    <property type="match status" value="1"/>
</dbReference>
<dbReference type="PROSITE" id="PS51722">
    <property type="entry name" value="G_TR_2"/>
    <property type="match status" value="1"/>
</dbReference>
<organism>
    <name type="scientific">Sordaria macrospora (strain ATCC MYA-333 / DSM 997 / K(L3346) / K-hell)</name>
    <dbReference type="NCBI Taxonomy" id="771870"/>
    <lineage>
        <taxon>Eukaryota</taxon>
        <taxon>Fungi</taxon>
        <taxon>Dikarya</taxon>
        <taxon>Ascomycota</taxon>
        <taxon>Pezizomycotina</taxon>
        <taxon>Sordariomycetes</taxon>
        <taxon>Sordariomycetidae</taxon>
        <taxon>Sordariales</taxon>
        <taxon>Sordariaceae</taxon>
        <taxon>Sordaria</taxon>
    </lineage>
</organism>
<gene>
    <name evidence="1" type="primary">GUF1</name>
    <name type="ORF">SMAC_06946</name>
</gene>
<comment type="function">
    <text evidence="1">Promotes mitochondrial protein synthesis. May act as a fidelity factor of the translation reaction, by catalyzing a one-codon backward translocation of tRNAs on improperly translocated ribosomes. Binds to mitochondrial ribosomes in a GTP-dependent manner.</text>
</comment>
<comment type="catalytic activity">
    <reaction evidence="1">
        <text>GTP + H2O = GDP + phosphate + H(+)</text>
        <dbReference type="Rhea" id="RHEA:19669"/>
        <dbReference type="ChEBI" id="CHEBI:15377"/>
        <dbReference type="ChEBI" id="CHEBI:15378"/>
        <dbReference type="ChEBI" id="CHEBI:37565"/>
        <dbReference type="ChEBI" id="CHEBI:43474"/>
        <dbReference type="ChEBI" id="CHEBI:58189"/>
    </reaction>
</comment>
<comment type="subcellular location">
    <subcellularLocation>
        <location evidence="1">Mitochondrion inner membrane</location>
        <topology evidence="1">Peripheral membrane protein</topology>
        <orientation evidence="1">Matrix side</orientation>
    </subcellularLocation>
</comment>
<comment type="miscellaneous">
    <text evidence="1">This protein may be expected to contain an N-terminal transit peptide but none has been predicted.</text>
</comment>
<comment type="similarity">
    <text evidence="3">Belongs to the TRAFAC class translation factor GTPase superfamily. Classic translation factor GTPase family. LepA subfamily.</text>
</comment>
<protein>
    <recommendedName>
        <fullName evidence="1">Translation factor GUF1, mitochondrial</fullName>
        <ecNumber>3.6.5.-</ecNumber>
    </recommendedName>
    <alternativeName>
        <fullName evidence="1">Elongation factor 4 homolog</fullName>
        <shortName evidence="1">EF-4</shortName>
    </alternativeName>
    <alternativeName>
        <fullName evidence="1">GTPase GUF1</fullName>
    </alternativeName>
    <alternativeName>
        <fullName evidence="1">Ribosomal back-translocase</fullName>
    </alternativeName>
</protein>
<feature type="chain" id="PRO_0000402905" description="Translation factor GUF1, mitochondrial">
    <location>
        <begin position="1"/>
        <end position="690"/>
    </location>
</feature>
<feature type="domain" description="tr-type G">
    <location>
        <begin position="89"/>
        <end position="272"/>
    </location>
</feature>
<feature type="region of interest" description="Disordered" evidence="2">
    <location>
        <begin position="40"/>
        <end position="68"/>
    </location>
</feature>
<feature type="compositionally biased region" description="Low complexity" evidence="2">
    <location>
        <begin position="52"/>
        <end position="68"/>
    </location>
</feature>
<feature type="binding site" evidence="1">
    <location>
        <begin position="98"/>
        <end position="105"/>
    </location>
    <ligand>
        <name>GTP</name>
        <dbReference type="ChEBI" id="CHEBI:37565"/>
    </ligand>
</feature>
<feature type="binding site" evidence="1">
    <location>
        <begin position="165"/>
        <end position="169"/>
    </location>
    <ligand>
        <name>GTP</name>
        <dbReference type="ChEBI" id="CHEBI:37565"/>
    </ligand>
</feature>
<feature type="binding site" evidence="1">
    <location>
        <begin position="219"/>
        <end position="222"/>
    </location>
    <ligand>
        <name>GTP</name>
        <dbReference type="ChEBI" id="CHEBI:37565"/>
    </ligand>
</feature>
<proteinExistence type="inferred from homology"/>
<name>GUF1_SORMK</name>